<organism evidence="15">
    <name type="scientific">Anopheles gambiae</name>
    <name type="common">African malaria mosquito</name>
    <dbReference type="NCBI Taxonomy" id="7165"/>
    <lineage>
        <taxon>Eukaryota</taxon>
        <taxon>Metazoa</taxon>
        <taxon>Ecdysozoa</taxon>
        <taxon>Arthropoda</taxon>
        <taxon>Hexapoda</taxon>
        <taxon>Insecta</taxon>
        <taxon>Pterygota</taxon>
        <taxon>Neoptera</taxon>
        <taxon>Endopterygota</taxon>
        <taxon>Diptera</taxon>
        <taxon>Nematocera</taxon>
        <taxon>Culicoidea</taxon>
        <taxon>Culicidae</taxon>
        <taxon>Anophelinae</taxon>
        <taxon>Anopheles</taxon>
    </lineage>
</organism>
<keyword id="KW-1015">Disulfide bond</keyword>
<keyword id="KW-0325">Glycoprotein</keyword>
<keyword id="KW-0378">Hydrolase</keyword>
<keyword id="KW-0391">Immunity</keyword>
<keyword id="KW-0399">Innate immunity</keyword>
<keyword id="KW-0645">Protease</keyword>
<keyword id="KW-1185">Reference proteome</keyword>
<keyword id="KW-0964">Secreted</keyword>
<keyword id="KW-0720">Serine protease</keyword>
<keyword id="KW-0732">Signal</keyword>
<keyword id="KW-0865">Zymogen</keyword>
<sequence length="401" mass="43934">MTSYNRSVAWLTVCVLLALHIGGSHQQQQQCTTPTRLRGRCISIYECDSILDYFKQRILTWEEREFLRKSQCTGATSGRQPFVCCPGNGSKPVVAPATTVPAGTASTTPAGPAATAPSGDAALADQLVGGLLPNPKKNECGVSIGMRIYGGQNADIDEFPWLALLQYENRKGERKYSCGGSLINRRYVLTAAHCVIGEVERKEGKLVSVRLGEYNTKTEIDCVTEEQEEICADPPIDAGIESVIVHPGYQDMAHADDIALLRLAQSIEYTSFVQPVCLPLTDFRASKTGEVNFVTGFGRTLQESRSAVKQKLGIKVYDHARCQEKYATKNSSITTNQLCAGGEYAKDSCHGDSGGPLMKLQKVWYLEGIVSYGNRCGLEDWPGVYTHVPAYMAWVRSNIKE</sequence>
<protein>
    <recommendedName>
        <fullName evidence="12">CLIP domain-containing serine protease B9</fullName>
        <ecNumber evidence="6 8 9 10">3.4.21.-</ecNumber>
    </recommendedName>
    <alternativeName>
        <fullName evidence="12">Phenoloxidase-activating enzyme B9</fullName>
    </alternativeName>
    <component>
        <recommendedName>
            <fullName evidence="12">CLIP domain-containing serine protease B9 light chain</fullName>
        </recommendedName>
    </component>
    <component>
        <recommendedName>
            <fullName evidence="12">CLIP domain-containing serine protease B9 heavy chain</fullName>
        </recommendedName>
    </component>
</protein>
<comment type="function">
    <text evidence="8 9 10">Serine protease that functions in the melanization-mediated immune response (PubMed:20953892, PubMed:25525260, PubMed:26926112). Cleaves and activates prophenoloxidase (PPO), which is required for the activation of the prophenoloxidase cascade probably following the recognition of pathogen-derived products (PubMed:20953892, PubMed:26926112).</text>
</comment>
<comment type="activity regulation">
    <text evidence="8 9">Inhibited by serpin SRPN2.</text>
</comment>
<comment type="subunit">
    <text evidence="8 9">Forms a covalent heterodimer with SRPN2; the interaction inhibits CLIPB9 protease activity.</text>
</comment>
<comment type="subcellular location">
    <subcellularLocation>
        <location evidence="7">Secreted</location>
    </subcellularLocation>
</comment>
<comment type="domain">
    <text evidence="7">The clip domain consists of 35-55 residues which are 'knitted' together usually by 3 conserved disulfide bonds forming a clip-like compact structure.</text>
</comment>
<comment type="PTM">
    <text evidence="8 9 10">Proteolytic cleavage is necessary for activation.</text>
</comment>
<comment type="disruption phenotype">
    <text evidence="8 10">RNAi-mediated knockdown in female does not affect lifespan and basal melanization (PubMed:20953892). Simultaneous RNAi-mediated knockdown of SRPN2 and CLIPB9 in female, reduces the spontaneous melanization and the lifespan shortening occurring in SRPN2 RNAi-mediated knockdown (PubMed:20953892, PubMed:26926112).</text>
</comment>
<comment type="similarity">
    <text evidence="7">Belongs to the peptidase S1 family. CLIP subfamily.</text>
</comment>
<proteinExistence type="evidence at protein level"/>
<gene>
    <name evidence="11" type="primary">CLIPB9</name>
    <name type="synonym">11175774</name>
    <name evidence="14" type="ORF">AgaP_AGAP013442</name>
</gene>
<evidence type="ECO:0000250" key="1">
    <source>
        <dbReference type="UniProtKB" id="Q9GRW0"/>
    </source>
</evidence>
<evidence type="ECO:0000255" key="2"/>
<evidence type="ECO:0000255" key="3">
    <source>
        <dbReference type="PROSITE-ProRule" id="PRU00274"/>
    </source>
</evidence>
<evidence type="ECO:0000255" key="4">
    <source>
        <dbReference type="PROSITE-ProRule" id="PRU00498"/>
    </source>
</evidence>
<evidence type="ECO:0000255" key="5">
    <source>
        <dbReference type="PROSITE-ProRule" id="PRU01236"/>
    </source>
</evidence>
<evidence type="ECO:0000255" key="6">
    <source>
        <dbReference type="RuleBase" id="RU363034"/>
    </source>
</evidence>
<evidence type="ECO:0000255" key="7">
    <source>
        <dbReference type="RuleBase" id="RU366078"/>
    </source>
</evidence>
<evidence type="ECO:0000269" key="8">
    <source>
    </source>
</evidence>
<evidence type="ECO:0000269" key="9">
    <source>
    </source>
</evidence>
<evidence type="ECO:0000269" key="10">
    <source>
    </source>
</evidence>
<evidence type="ECO:0000303" key="11">
    <source>
    </source>
</evidence>
<evidence type="ECO:0000305" key="12"/>
<evidence type="ECO:0000312" key="13">
    <source>
        <dbReference type="EMBL" id="ADZ72972.1"/>
    </source>
</evidence>
<evidence type="ECO:0000312" key="14">
    <source>
        <dbReference type="EMBL" id="EGK96931.1"/>
    </source>
</evidence>
<evidence type="ECO:0000312" key="15">
    <source>
        <dbReference type="Proteomes" id="UP000007062"/>
    </source>
</evidence>
<accession>F5HKX0</accession>
<accession>F4YJV1</accession>
<reference evidence="13" key="1">
    <citation type="journal article" date="2011" name="Cell. Mol. Life Sci.">
        <title>Characterization of a regulatory unit that controls melanization and affects longevity of mosquitoes.</title>
        <authorList>
            <person name="An C."/>
            <person name="Budd A."/>
            <person name="Kanost M.R."/>
            <person name="Michel K."/>
        </authorList>
    </citation>
    <scope>NUCLEOTIDE SEQUENCE [MRNA]</scope>
    <scope>FUNCTION</scope>
    <scope>CATALYTIC ACTIVITY</scope>
    <scope>ACTIVITY REGULATION</scope>
    <scope>INTERACTION WITH SRPN2</scope>
    <scope>SUBCELLULAR LOCATION</scope>
    <scope>PROTEOLYTIC CLEAVAGE</scope>
    <scope>DISRUPTION PHENOTYPE</scope>
    <source>
        <strain evidence="8">G3</strain>
    </source>
</reference>
<reference evidence="15" key="2">
    <citation type="journal article" date="2002" name="Science">
        <title>The genome sequence of the malaria mosquito Anopheles gambiae.</title>
        <authorList>
            <person name="Holt R.A."/>
            <person name="Subramanian G.M."/>
            <person name="Halpern A."/>
            <person name="Sutton G.G."/>
            <person name="Charlab R."/>
            <person name="Nusskern D.R."/>
            <person name="Wincker P."/>
            <person name="Clark A.G."/>
            <person name="Ribeiro J.M.C."/>
            <person name="Wides R."/>
            <person name="Salzberg S.L."/>
            <person name="Loftus B.J."/>
            <person name="Yandell M.D."/>
            <person name="Majoros W.H."/>
            <person name="Rusch D.B."/>
            <person name="Lai Z."/>
            <person name="Kraft C.L."/>
            <person name="Abril J.F."/>
            <person name="Anthouard V."/>
            <person name="Arensburger P."/>
            <person name="Atkinson P.W."/>
            <person name="Baden H."/>
            <person name="de Berardinis V."/>
            <person name="Baldwin D."/>
            <person name="Benes V."/>
            <person name="Biedler J."/>
            <person name="Blass C."/>
            <person name="Bolanos R."/>
            <person name="Boscus D."/>
            <person name="Barnstead M."/>
            <person name="Cai S."/>
            <person name="Center A."/>
            <person name="Chaturverdi K."/>
            <person name="Christophides G.K."/>
            <person name="Chrystal M.A.M."/>
            <person name="Clamp M."/>
            <person name="Cravchik A."/>
            <person name="Curwen V."/>
            <person name="Dana A."/>
            <person name="Delcher A."/>
            <person name="Dew I."/>
            <person name="Evans C.A."/>
            <person name="Flanigan M."/>
            <person name="Grundschober-Freimoser A."/>
            <person name="Friedli L."/>
            <person name="Gu Z."/>
            <person name="Guan P."/>
            <person name="Guigo R."/>
            <person name="Hillenmeyer M.E."/>
            <person name="Hladun S.L."/>
            <person name="Hogan J.R."/>
            <person name="Hong Y.S."/>
            <person name="Hoover J."/>
            <person name="Jaillon O."/>
            <person name="Ke Z."/>
            <person name="Kodira C.D."/>
            <person name="Kokoza E."/>
            <person name="Koutsos A."/>
            <person name="Letunic I."/>
            <person name="Levitsky A.A."/>
            <person name="Liang Y."/>
            <person name="Lin J.-J."/>
            <person name="Lobo N.F."/>
            <person name="Lopez J.R."/>
            <person name="Malek J.A."/>
            <person name="McIntosh T.C."/>
            <person name="Meister S."/>
            <person name="Miller J.R."/>
            <person name="Mobarry C."/>
            <person name="Mongin E."/>
            <person name="Murphy S.D."/>
            <person name="O'Brochta D.A."/>
            <person name="Pfannkoch C."/>
            <person name="Qi R."/>
            <person name="Regier M.A."/>
            <person name="Remington K."/>
            <person name="Shao H."/>
            <person name="Sharakhova M.V."/>
            <person name="Sitter C.D."/>
            <person name="Shetty J."/>
            <person name="Smith T.J."/>
            <person name="Strong R."/>
            <person name="Sun J."/>
            <person name="Thomasova D."/>
            <person name="Ton L.Q."/>
            <person name="Topalis P."/>
            <person name="Tu Z.J."/>
            <person name="Unger M.F."/>
            <person name="Walenz B."/>
            <person name="Wang A.H."/>
            <person name="Wang J."/>
            <person name="Wang M."/>
            <person name="Wang X."/>
            <person name="Woodford K.J."/>
            <person name="Wortman J.R."/>
            <person name="Wu M."/>
            <person name="Yao A."/>
            <person name="Zdobnov E.M."/>
            <person name="Zhang H."/>
            <person name="Zhao Q."/>
            <person name="Zhao S."/>
            <person name="Zhu S.C."/>
            <person name="Zhimulev I."/>
            <person name="Coluzzi M."/>
            <person name="della Torre A."/>
            <person name="Roth C.W."/>
            <person name="Louis C."/>
            <person name="Kalush F."/>
            <person name="Mural R.J."/>
            <person name="Myers E.W."/>
            <person name="Adams M.D."/>
            <person name="Smith H.O."/>
            <person name="Broder S."/>
            <person name="Gardner M.J."/>
            <person name="Fraser C.M."/>
            <person name="Birney E."/>
            <person name="Bork P."/>
            <person name="Brey P.T."/>
            <person name="Venter J.C."/>
            <person name="Weissenbach J."/>
            <person name="Kafatos F.C."/>
            <person name="Collins F.H."/>
            <person name="Hoffman S.L."/>
        </authorList>
    </citation>
    <scope>NUCLEOTIDE SEQUENCE [LARGE SCALE GENOMIC DNA]</scope>
    <source>
        <strain evidence="15">PEST</strain>
    </source>
</reference>
<reference evidence="12" key="3">
    <citation type="journal article" date="2015" name="J. Biol. Chem.">
        <title>Structural and inhibitory effects of hinge loop mutagenesis in serpin-2 from the malaria vector Anopheles gambiae.</title>
        <authorList>
            <person name="Zhang X."/>
            <person name="Meekins D.A."/>
            <person name="An C."/>
            <person name="Zolkiewski M."/>
            <person name="Battaile K.P."/>
            <person name="Kanost M.R."/>
            <person name="Lovell S."/>
            <person name="Michel K."/>
        </authorList>
    </citation>
    <scope>FUNCTION</scope>
    <scope>CATALYTIC ACTIVITY</scope>
    <scope>ACTIVITY REGULATION</scope>
    <scope>INTERACTION WITH SRPN2</scope>
    <scope>PROTEOLYTIC CLEAVAGE</scope>
</reference>
<reference evidence="12" key="4">
    <citation type="journal article" date="2016" name="Insect Biochem. Mol. Biol.">
        <title>CLIPB8 is part of the prophenoloxidase activation system in Anopheles gambiae mosquitoes.</title>
        <authorList>
            <person name="Zhang X."/>
            <person name="An C."/>
            <person name="Sprigg K."/>
            <person name="Michel K."/>
        </authorList>
    </citation>
    <scope>FUNCTION</scope>
    <scope>CATALYTIC ACTIVITY</scope>
    <scope>PROTEOLYTIC CLEAVAGE</scope>
    <scope>DISRUPTION PHENOTYPE</scope>
    <source>
        <strain evidence="10">G3</strain>
    </source>
</reference>
<dbReference type="EC" id="3.4.21.-" evidence="6 8 9 10"/>
<dbReference type="EMBL" id="HM070255">
    <property type="protein sequence ID" value="ADZ72972.1"/>
    <property type="molecule type" value="mRNA"/>
</dbReference>
<dbReference type="EMBL" id="AAAB01008879">
    <property type="protein sequence ID" value="EGK96931.1"/>
    <property type="molecule type" value="Genomic_DNA"/>
</dbReference>
<dbReference type="RefSeq" id="XP_003436374.1">
    <property type="nucleotide sequence ID" value="XM_003436326.1"/>
</dbReference>
<dbReference type="SMR" id="F5HKX0"/>
<dbReference type="FunCoup" id="F5HKX0">
    <property type="interactions" value="44"/>
</dbReference>
<dbReference type="STRING" id="7165.F5HKX0"/>
<dbReference type="MEROPS" id="S01.203"/>
<dbReference type="GlyCosmos" id="F5HKX0">
    <property type="glycosylation" value="2 sites, No reported glycans"/>
</dbReference>
<dbReference type="PaxDb" id="7165-AGAP013442-PC"/>
<dbReference type="EnsemblMetazoa" id="AGAP029769-RA">
    <property type="protein sequence ID" value="AGAP029769-PA"/>
    <property type="gene ID" value="AGAP029769"/>
</dbReference>
<dbReference type="VEuPathDB" id="VectorBase:AGAMI1_013176"/>
<dbReference type="VEuPathDB" id="VectorBase:AGAP029769"/>
<dbReference type="eggNOG" id="KOG3627">
    <property type="taxonomic scope" value="Eukaryota"/>
</dbReference>
<dbReference type="InParanoid" id="F5HKX0"/>
<dbReference type="PhylomeDB" id="F5HKX0"/>
<dbReference type="Proteomes" id="UP000007062">
    <property type="component" value="Chromosome 2R"/>
</dbReference>
<dbReference type="GO" id="GO:0005615">
    <property type="term" value="C:extracellular space"/>
    <property type="evidence" value="ECO:0000318"/>
    <property type="project" value="GO_Central"/>
</dbReference>
<dbReference type="GO" id="GO:0004252">
    <property type="term" value="F:serine-type endopeptidase activity"/>
    <property type="evidence" value="ECO:0000314"/>
    <property type="project" value="UniProtKB"/>
</dbReference>
<dbReference type="GO" id="GO:0045087">
    <property type="term" value="P:innate immune response"/>
    <property type="evidence" value="ECO:0007669"/>
    <property type="project" value="UniProtKB-KW"/>
</dbReference>
<dbReference type="GO" id="GO:0035008">
    <property type="term" value="P:positive regulation of melanization defense response"/>
    <property type="evidence" value="ECO:0000314"/>
    <property type="project" value="UniProtKB"/>
</dbReference>
<dbReference type="GO" id="GO:0016485">
    <property type="term" value="P:protein processing"/>
    <property type="evidence" value="ECO:0000314"/>
    <property type="project" value="UniProtKB"/>
</dbReference>
<dbReference type="GO" id="GO:0006508">
    <property type="term" value="P:proteolysis"/>
    <property type="evidence" value="ECO:0000314"/>
    <property type="project" value="UniProtKB"/>
</dbReference>
<dbReference type="CDD" id="cd00190">
    <property type="entry name" value="Tryp_SPc"/>
    <property type="match status" value="1"/>
</dbReference>
<dbReference type="FunFam" id="3.30.1640.30:FF:000001">
    <property type="entry name" value="Serine protease 7"/>
    <property type="match status" value="1"/>
</dbReference>
<dbReference type="FunFam" id="2.40.10.10:FF:000028">
    <property type="entry name" value="Serine protease easter"/>
    <property type="match status" value="1"/>
</dbReference>
<dbReference type="FunFam" id="2.40.10.10:FF:000084">
    <property type="entry name" value="Serine protease easter"/>
    <property type="match status" value="1"/>
</dbReference>
<dbReference type="Gene3D" id="3.30.1640.30">
    <property type="match status" value="1"/>
</dbReference>
<dbReference type="Gene3D" id="2.40.10.10">
    <property type="entry name" value="Trypsin-like serine proteases"/>
    <property type="match status" value="2"/>
</dbReference>
<dbReference type="InterPro" id="IPR022700">
    <property type="entry name" value="CLIP"/>
</dbReference>
<dbReference type="InterPro" id="IPR038565">
    <property type="entry name" value="CLIP_sf"/>
</dbReference>
<dbReference type="InterPro" id="IPR009003">
    <property type="entry name" value="Peptidase_S1_PA"/>
</dbReference>
<dbReference type="InterPro" id="IPR043504">
    <property type="entry name" value="Peptidase_S1_PA_chymotrypsin"/>
</dbReference>
<dbReference type="InterPro" id="IPR001314">
    <property type="entry name" value="Peptidase_S1A"/>
</dbReference>
<dbReference type="InterPro" id="IPR051487">
    <property type="entry name" value="Ser/Thr_Proteases_Immune/Dev"/>
</dbReference>
<dbReference type="InterPro" id="IPR001254">
    <property type="entry name" value="Trypsin_dom"/>
</dbReference>
<dbReference type="InterPro" id="IPR018114">
    <property type="entry name" value="TRYPSIN_HIS"/>
</dbReference>
<dbReference type="InterPro" id="IPR033116">
    <property type="entry name" value="TRYPSIN_SER"/>
</dbReference>
<dbReference type="PANTHER" id="PTHR24256">
    <property type="entry name" value="TRYPTASE-RELATED"/>
    <property type="match status" value="1"/>
</dbReference>
<dbReference type="Pfam" id="PF12032">
    <property type="entry name" value="CLIP"/>
    <property type="match status" value="1"/>
</dbReference>
<dbReference type="Pfam" id="PF00089">
    <property type="entry name" value="Trypsin"/>
    <property type="match status" value="1"/>
</dbReference>
<dbReference type="PRINTS" id="PR00722">
    <property type="entry name" value="CHYMOTRYPSIN"/>
</dbReference>
<dbReference type="SMART" id="SM00680">
    <property type="entry name" value="CLIP"/>
    <property type="match status" value="1"/>
</dbReference>
<dbReference type="SMART" id="SM00020">
    <property type="entry name" value="Tryp_SPc"/>
    <property type="match status" value="1"/>
</dbReference>
<dbReference type="SUPFAM" id="SSF50494">
    <property type="entry name" value="Trypsin-like serine proteases"/>
    <property type="match status" value="1"/>
</dbReference>
<dbReference type="PROSITE" id="PS51888">
    <property type="entry name" value="CLIP"/>
    <property type="match status" value="1"/>
</dbReference>
<dbReference type="PROSITE" id="PS50240">
    <property type="entry name" value="TRYPSIN_DOM"/>
    <property type="match status" value="1"/>
</dbReference>
<dbReference type="PROSITE" id="PS00134">
    <property type="entry name" value="TRYPSIN_HIS"/>
    <property type="match status" value="1"/>
</dbReference>
<dbReference type="PROSITE" id="PS00135">
    <property type="entry name" value="TRYPSIN_SER"/>
    <property type="match status" value="1"/>
</dbReference>
<feature type="signal peptide" evidence="2">
    <location>
        <begin position="1"/>
        <end position="26"/>
    </location>
</feature>
<feature type="chain" id="PRO_5014571538" description="CLIP domain-containing serine protease B9" evidence="2">
    <location>
        <begin position="27"/>
        <end position="401"/>
    </location>
</feature>
<feature type="chain" id="PRO_0000455756" description="CLIP domain-containing serine protease B9 light chain" evidence="1">
    <location>
        <begin position="27"/>
        <end position="147"/>
    </location>
</feature>
<feature type="chain" id="PRO_0000455757" description="CLIP domain-containing serine protease B9 heavy chain" evidence="1">
    <location>
        <begin position="148"/>
        <end position="401"/>
    </location>
</feature>
<feature type="domain" description="Clip" evidence="5">
    <location>
        <begin position="30"/>
        <end position="85"/>
    </location>
</feature>
<feature type="domain" description="Peptidase S1" evidence="3">
    <location>
        <begin position="148"/>
        <end position="400"/>
    </location>
</feature>
<feature type="active site" description="Charge relay system" evidence="3">
    <location>
        <position position="193"/>
    </location>
</feature>
<feature type="active site" description="Charge relay system" evidence="3">
    <location>
        <position position="257"/>
    </location>
</feature>
<feature type="active site" description="Charge relay system" evidence="3">
    <location>
        <position position="353"/>
    </location>
</feature>
<feature type="site" description="Cleavage" evidence="1">
    <location>
        <begin position="147"/>
        <end position="148"/>
    </location>
</feature>
<feature type="glycosylation site" description="N-linked (GlcNAc...) asparagine" evidence="4">
    <location>
        <position position="88"/>
    </location>
</feature>
<feature type="glycosylation site" description="N-linked (GlcNAc...) asparagine" evidence="4">
    <location>
        <position position="330"/>
    </location>
</feature>
<feature type="disulfide bond" evidence="5">
    <location>
        <begin position="31"/>
        <end position="84"/>
    </location>
</feature>
<feature type="disulfide bond" evidence="5">
    <location>
        <begin position="41"/>
        <end position="72"/>
    </location>
</feature>
<feature type="disulfide bond" evidence="5">
    <location>
        <begin position="47"/>
        <end position="85"/>
    </location>
</feature>
<feature type="disulfide bond" evidence="3">
    <location>
        <begin position="178"/>
        <end position="194"/>
    </location>
</feature>
<feature type="disulfide bond" evidence="3">
    <location>
        <begin position="322"/>
        <end position="339"/>
    </location>
</feature>
<feature type="disulfide bond" evidence="3">
    <location>
        <begin position="349"/>
        <end position="376"/>
    </location>
</feature>
<feature type="sequence conflict" description="In Ref. 1; ADZ72972." evidence="12" ref="1">
    <original>I</original>
    <variation>V</variation>
    <location>
        <position position="236"/>
    </location>
</feature>
<name>CLB9_ANOGA</name>